<keyword id="KW-0025">Alternative splicing</keyword>
<keyword id="KW-0040">ANK repeat</keyword>
<keyword id="KW-0395">Inflammatory response</keyword>
<keyword id="KW-0539">Nucleus</keyword>
<keyword id="KW-1267">Proteomics identification</keyword>
<keyword id="KW-1185">Reference proteome</keyword>
<keyword id="KW-0677">Repeat</keyword>
<evidence type="ECO:0000250" key="1">
    <source>
        <dbReference type="UniProtKB" id="Q2TB02"/>
    </source>
</evidence>
<evidence type="ECO:0000303" key="2">
    <source>
    </source>
</evidence>
<evidence type="ECO:0000303" key="3">
    <source>
    </source>
</evidence>
<evidence type="ECO:0000305" key="4"/>
<sequence>MEAGPWRVSAPPSGPPQFPAVVPGPSLEVARAHMLALGPQQLLAQDEEGDTLLHLFAARGLRWAAYAAAEVLQVYRRLDIREHKGKTPLLVAAAANQPLIVEDLLNLGAEPNAADHQGRSVLHVAATYGLPGVLLAVLNSGVQVDLEARDFEGLTPLHTAILALNVAMRPSDLCPRVLSTQARDRLDCVHMLLQMGANHTSQEIKSNKTVLHLAVQAANPTLVQLLLELPRGDLRTFVNMKAHGNTALHMAAALPPGPAQEAIVRHLLAAGADPTLRNLENEQPVHLLRPGPGPEGLRQLLKRSRVAPPGLSS</sequence>
<gene>
    <name type="primary">NFKBID</name>
    <name type="synonym">IKBNS</name>
</gene>
<dbReference type="EMBL" id="AF385433">
    <property type="protein sequence ID" value="AAM43834.1"/>
    <property type="molecule type" value="mRNA"/>
</dbReference>
<dbReference type="EMBL" id="AF385434">
    <property type="protein sequence ID" value="AAM43835.1"/>
    <property type="molecule type" value="mRNA"/>
</dbReference>
<dbReference type="EMBL" id="BC006273">
    <property type="protein sequence ID" value="AAH06273.1"/>
    <property type="molecule type" value="mRNA"/>
</dbReference>
<dbReference type="EMBL" id="BC119646">
    <property type="protein sequence ID" value="AAI19647.1"/>
    <property type="molecule type" value="mRNA"/>
</dbReference>
<dbReference type="EMBL" id="BC119647">
    <property type="protein sequence ID" value="AAI19648.1"/>
    <property type="molecule type" value="mRNA"/>
</dbReference>
<dbReference type="CCDS" id="CCDS42552.1">
    <molecule id="Q8NI38-1"/>
</dbReference>
<dbReference type="CCDS" id="CCDS92601.1">
    <molecule id="Q8NI38-2"/>
</dbReference>
<dbReference type="RefSeq" id="NP_001352634.1">
    <molecule id="Q8NI38-1"/>
    <property type="nucleotide sequence ID" value="NM_001365705.1"/>
</dbReference>
<dbReference type="RefSeq" id="NP_640332.1">
    <property type="nucleotide sequence ID" value="NM_139239.2"/>
</dbReference>
<dbReference type="RefSeq" id="XP_011525721.1">
    <property type="nucleotide sequence ID" value="XM_011527419.2"/>
</dbReference>
<dbReference type="RefSeq" id="XP_016882880.1">
    <property type="nucleotide sequence ID" value="XM_017027391.1"/>
</dbReference>
<dbReference type="RefSeq" id="XP_016882881.1">
    <property type="nucleotide sequence ID" value="XM_017027392.1"/>
</dbReference>
<dbReference type="RefSeq" id="XP_016882882.1">
    <property type="nucleotide sequence ID" value="XM_017027393.1"/>
</dbReference>
<dbReference type="SMR" id="Q8NI38"/>
<dbReference type="BioGRID" id="124269">
    <property type="interactions" value="121"/>
</dbReference>
<dbReference type="FunCoup" id="Q8NI38">
    <property type="interactions" value="837"/>
</dbReference>
<dbReference type="IntAct" id="Q8NI38">
    <property type="interactions" value="117"/>
</dbReference>
<dbReference type="MINT" id="Q8NI38"/>
<dbReference type="STRING" id="9606.ENSP00000380109"/>
<dbReference type="iPTMnet" id="Q8NI38"/>
<dbReference type="PhosphoSitePlus" id="Q8NI38"/>
<dbReference type="BioMuta" id="NFKBID"/>
<dbReference type="DMDM" id="74751323"/>
<dbReference type="jPOST" id="Q8NI38"/>
<dbReference type="MassIVE" id="Q8NI38"/>
<dbReference type="PaxDb" id="9606-ENSP00000380109"/>
<dbReference type="PeptideAtlas" id="Q8NI38"/>
<dbReference type="ProteomicsDB" id="73829">
    <molecule id="Q8NI38-1"/>
</dbReference>
<dbReference type="ProteomicsDB" id="73830">
    <molecule id="Q8NI38-2"/>
</dbReference>
<dbReference type="Antibodypedia" id="48023">
    <property type="antibodies" value="141 antibodies from 18 providers"/>
</dbReference>
<dbReference type="DNASU" id="84807"/>
<dbReference type="Ensembl" id="ENST00000585544.2">
    <molecule id="Q8NI38-1"/>
    <property type="protein sequence ID" value="ENSP00000520478.1"/>
    <property type="gene ID" value="ENSG00000167604.16"/>
</dbReference>
<dbReference type="Ensembl" id="ENST00000606253.5">
    <molecule id="Q8NI38-2"/>
    <property type="protein sequence ID" value="ENSP00000475712.2"/>
    <property type="gene ID" value="ENSG00000167604.16"/>
</dbReference>
<dbReference type="GeneID" id="84807"/>
<dbReference type="KEGG" id="hsa:84807"/>
<dbReference type="UCSC" id="uc002oci.1">
    <molecule id="Q8NI38-1"/>
    <property type="organism name" value="human"/>
</dbReference>
<dbReference type="AGR" id="HGNC:15671"/>
<dbReference type="CTD" id="84807"/>
<dbReference type="DisGeNET" id="84807"/>
<dbReference type="GeneCards" id="NFKBID"/>
<dbReference type="HGNC" id="HGNC:15671">
    <property type="gene designation" value="NFKBID"/>
</dbReference>
<dbReference type="HPA" id="ENSG00000167604">
    <property type="expression patterns" value="Tissue enhanced (bone)"/>
</dbReference>
<dbReference type="MIM" id="618887">
    <property type="type" value="gene"/>
</dbReference>
<dbReference type="neXtProt" id="NX_Q8NI38"/>
<dbReference type="OpenTargets" id="ENSG00000167604"/>
<dbReference type="PharmGKB" id="PA162397453"/>
<dbReference type="VEuPathDB" id="HostDB:ENSG00000167604"/>
<dbReference type="eggNOG" id="KOG0504">
    <property type="taxonomic scope" value="Eukaryota"/>
</dbReference>
<dbReference type="GeneTree" id="ENSGT00940000153695"/>
<dbReference type="HOGENOM" id="CLU_046801_0_0_1"/>
<dbReference type="InParanoid" id="Q8NI38"/>
<dbReference type="OMA" id="CSFPLGM"/>
<dbReference type="OrthoDB" id="194358at2759"/>
<dbReference type="PAN-GO" id="Q8NI38">
    <property type="GO annotations" value="2 GO annotations based on evolutionary models"/>
</dbReference>
<dbReference type="PhylomeDB" id="Q8NI38"/>
<dbReference type="TreeFam" id="TF330224"/>
<dbReference type="PathwayCommons" id="Q8NI38"/>
<dbReference type="SignaLink" id="Q8NI38"/>
<dbReference type="BioGRID-ORCS" id="84807">
    <property type="hits" value="11 hits in 1153 CRISPR screens"/>
</dbReference>
<dbReference type="ChiTaRS" id="NFKBID">
    <property type="organism name" value="human"/>
</dbReference>
<dbReference type="GenomeRNAi" id="84807"/>
<dbReference type="Pharos" id="Q8NI38">
    <property type="development level" value="Tbio"/>
</dbReference>
<dbReference type="PRO" id="PR:Q8NI38"/>
<dbReference type="Proteomes" id="UP000005640">
    <property type="component" value="Chromosome 19"/>
</dbReference>
<dbReference type="RNAct" id="Q8NI38">
    <property type="molecule type" value="protein"/>
</dbReference>
<dbReference type="Bgee" id="ENSG00000167604">
    <property type="expression patterns" value="Expressed in bone marrow cell and 105 other cell types or tissues"/>
</dbReference>
<dbReference type="ExpressionAtlas" id="Q8NI38">
    <property type="expression patterns" value="baseline and differential"/>
</dbReference>
<dbReference type="GO" id="GO:0005634">
    <property type="term" value="C:nucleus"/>
    <property type="evidence" value="ECO:0000318"/>
    <property type="project" value="GO_Central"/>
</dbReference>
<dbReference type="GO" id="GO:0006954">
    <property type="term" value="P:inflammatory response"/>
    <property type="evidence" value="ECO:0007669"/>
    <property type="project" value="UniProtKB-KW"/>
</dbReference>
<dbReference type="GO" id="GO:2000321">
    <property type="term" value="P:positive regulation of T-helper 17 cell differentiation"/>
    <property type="evidence" value="ECO:0000250"/>
    <property type="project" value="UniProtKB"/>
</dbReference>
<dbReference type="GO" id="GO:0010468">
    <property type="term" value="P:regulation of gene expression"/>
    <property type="evidence" value="ECO:0000318"/>
    <property type="project" value="GO_Central"/>
</dbReference>
<dbReference type="GO" id="GO:0050852">
    <property type="term" value="P:T cell receptor signaling pathway"/>
    <property type="evidence" value="ECO:0000250"/>
    <property type="project" value="UniProtKB"/>
</dbReference>
<dbReference type="FunFam" id="1.25.40.20:FF:000091">
    <property type="entry name" value="NF-kappa-B inhibitor delta"/>
    <property type="match status" value="1"/>
</dbReference>
<dbReference type="Gene3D" id="1.25.40.20">
    <property type="entry name" value="Ankyrin repeat-containing domain"/>
    <property type="match status" value="1"/>
</dbReference>
<dbReference type="InterPro" id="IPR002110">
    <property type="entry name" value="Ankyrin_rpt"/>
</dbReference>
<dbReference type="InterPro" id="IPR036770">
    <property type="entry name" value="Ankyrin_rpt-contain_sf"/>
</dbReference>
<dbReference type="PANTHER" id="PTHR24124">
    <property type="entry name" value="ANKYRIN REPEAT FAMILY A"/>
    <property type="match status" value="1"/>
</dbReference>
<dbReference type="PANTHER" id="PTHR24124:SF7">
    <property type="entry name" value="NF-KAPPA-B INHIBITOR DELTA"/>
    <property type="match status" value="1"/>
</dbReference>
<dbReference type="Pfam" id="PF12796">
    <property type="entry name" value="Ank_2"/>
    <property type="match status" value="1"/>
</dbReference>
<dbReference type="Pfam" id="PF13857">
    <property type="entry name" value="Ank_5"/>
    <property type="match status" value="1"/>
</dbReference>
<dbReference type="SMART" id="SM00248">
    <property type="entry name" value="ANK"/>
    <property type="match status" value="5"/>
</dbReference>
<dbReference type="SUPFAM" id="SSF48403">
    <property type="entry name" value="Ankyrin repeat"/>
    <property type="match status" value="1"/>
</dbReference>
<dbReference type="PROSITE" id="PS50297">
    <property type="entry name" value="ANK_REP_REGION"/>
    <property type="match status" value="1"/>
</dbReference>
<dbReference type="PROSITE" id="PS50088">
    <property type="entry name" value="ANK_REPEAT"/>
    <property type="match status" value="3"/>
</dbReference>
<reference key="1">
    <citation type="journal article" date="2004" name="Genomics">
        <title>T lymphocyte activation gene identification by coregulated expression on DNA microarrays.</title>
        <authorList>
            <person name="Mao M."/>
            <person name="Biery M.C."/>
            <person name="Kobayashi S.V."/>
            <person name="Ward T."/>
            <person name="Schimmack G."/>
            <person name="Burchard J."/>
            <person name="Schelter J.M."/>
            <person name="Dai H."/>
            <person name="He Y.D."/>
            <person name="Linsley P.S."/>
        </authorList>
    </citation>
    <scope>NUCLEOTIDE SEQUENCE [MRNA] (ISOFORMS 1 AND 2)</scope>
    <source>
        <tissue>T-cell</tissue>
    </source>
</reference>
<reference key="2">
    <citation type="journal article" date="2004" name="Genome Res.">
        <title>The status, quality, and expansion of the NIH full-length cDNA project: the Mammalian Gene Collection (MGC).</title>
        <authorList>
            <consortium name="The MGC Project Team"/>
        </authorList>
    </citation>
    <scope>NUCLEOTIDE SEQUENCE [LARGE SCALE MRNA] (ISOFORMS 1 AND 3)</scope>
    <source>
        <tissue>Ovary</tissue>
    </source>
</reference>
<accession>Q8NI38</accession>
<accession>Q8NI39</accession>
<accession>Q9BRG9</accession>
<name>IKBD_HUMAN</name>
<organism>
    <name type="scientific">Homo sapiens</name>
    <name type="common">Human</name>
    <dbReference type="NCBI Taxonomy" id="9606"/>
    <lineage>
        <taxon>Eukaryota</taxon>
        <taxon>Metazoa</taxon>
        <taxon>Chordata</taxon>
        <taxon>Craniata</taxon>
        <taxon>Vertebrata</taxon>
        <taxon>Euteleostomi</taxon>
        <taxon>Mammalia</taxon>
        <taxon>Eutheria</taxon>
        <taxon>Euarchontoglires</taxon>
        <taxon>Primates</taxon>
        <taxon>Haplorrhini</taxon>
        <taxon>Catarrhini</taxon>
        <taxon>Hominidae</taxon>
        <taxon>Homo</taxon>
    </lineage>
</organism>
<protein>
    <recommendedName>
        <fullName>NF-kappa-B inhibitor delta</fullName>
        <shortName>NFKB inhibitor delta</shortName>
    </recommendedName>
    <alternativeName>
        <fullName>I-kappa-B-delta</fullName>
        <shortName>IkB-delta</shortName>
        <shortName>IkappaBdelta</shortName>
    </alternativeName>
    <alternativeName>
        <fullName>IkappaBNS</fullName>
    </alternativeName>
    <alternativeName>
        <fullName>T-cell activation NFKB-like protein</fullName>
    </alternativeName>
    <alternativeName>
        <fullName>TA-NFKBH</fullName>
    </alternativeName>
</protein>
<comment type="function">
    <text evidence="1">Regulates the expression of IL-2, IL-6, and other cytokines through regulation on NF-kappa-B activity. Functions in the regulation of inflammatory responses. Involved in the induction of T helper 17 cells (Th17) differentiation upon recognition of antigen by T cell antigen receptor (TCR). May also regulate TCR-induced negative selection of thymocytes.</text>
</comment>
<comment type="subunit">
    <text evidence="1">Interacts with NFKB1, RELA and RELB; in the nucleus.</text>
</comment>
<comment type="interaction">
    <interactant intactId="EBI-10271199">
        <id>Q8NI38</id>
    </interactant>
    <interactant intactId="EBI-10173507">
        <id>Q6UY14-3</id>
        <label>ADAMTSL4</label>
    </interactant>
    <organismsDiffer>false</organismsDiffer>
    <experiments>3</experiments>
</comment>
<comment type="interaction">
    <interactant intactId="EBI-10271199">
        <id>Q8NI38</id>
    </interactant>
    <interactant intactId="EBI-8643161">
        <id>Q9NX04</id>
        <label>AIRIM</label>
    </interactant>
    <organismsDiffer>false</organismsDiffer>
    <experiments>3</experiments>
</comment>
<comment type="interaction">
    <interactant intactId="EBI-10271199">
        <id>Q8NI38</id>
    </interactant>
    <interactant intactId="EBI-715243">
        <id>P50995</id>
        <label>ANXA11</label>
    </interactant>
    <organismsDiffer>false</organismsDiffer>
    <experiments>3</experiments>
</comment>
<comment type="interaction">
    <interactant intactId="EBI-10271199">
        <id>Q8NI38</id>
    </interactant>
    <interactant intactId="EBI-302405">
        <id>Q92974</id>
        <label>ARHGEF2</label>
    </interactant>
    <organismsDiffer>false</organismsDiffer>
    <experiments>3</experiments>
</comment>
<comment type="interaction">
    <interactant intactId="EBI-10271199">
        <id>Q8NI38</id>
    </interactant>
    <interactant intactId="EBI-745073">
        <id>Q9BXY8</id>
        <label>BEX2</label>
    </interactant>
    <organismsDiffer>false</organismsDiffer>
    <experiments>3</experiments>
</comment>
<comment type="interaction">
    <interactant intactId="EBI-10271199">
        <id>Q8NI38</id>
    </interactant>
    <interactant intactId="EBI-946029">
        <id>Q6P1W5</id>
        <label>C1orf94</label>
    </interactant>
    <organismsDiffer>false</organismsDiffer>
    <experiments>7</experiments>
</comment>
<comment type="interaction">
    <interactant intactId="EBI-10271199">
        <id>Q8NI38</id>
    </interactant>
    <interactant intactId="EBI-10175300">
        <id>Q8TD31-3</id>
        <label>CCHCR1</label>
    </interactant>
    <organismsDiffer>false</organismsDiffer>
    <experiments>3</experiments>
</comment>
<comment type="interaction">
    <interactant intactId="EBI-10271199">
        <id>Q8NI38</id>
    </interactant>
    <interactant intactId="EBI-750444">
        <id>P53672</id>
        <label>CRYBA2</label>
    </interactant>
    <organismsDiffer>false</organismsDiffer>
    <experiments>3</experiments>
</comment>
<comment type="interaction">
    <interactant intactId="EBI-10271199">
        <id>Q8NI38</id>
    </interactant>
    <interactant intactId="EBI-10295404">
        <id>Q99895</id>
        <label>CTRC</label>
    </interactant>
    <organismsDiffer>false</organismsDiffer>
    <experiments>3</experiments>
</comment>
<comment type="interaction">
    <interactant intactId="EBI-10271199">
        <id>Q8NI38</id>
    </interactant>
    <interactant intactId="EBI-12102608">
        <id>Q6BCY4-2</id>
        <label>CYB5R2</label>
    </interactant>
    <organismsDiffer>false</organismsDiffer>
    <experiments>3</experiments>
</comment>
<comment type="interaction">
    <interactant intactId="EBI-10271199">
        <id>Q8NI38</id>
    </interactant>
    <interactant intactId="EBI-8787165">
        <id>Q9UHL0</id>
        <label>DDX25</label>
    </interactant>
    <organismsDiffer>false</organismsDiffer>
    <experiments>3</experiments>
</comment>
<comment type="interaction">
    <interactant intactId="EBI-10271199">
        <id>Q8NI38</id>
    </interactant>
    <interactant intactId="EBI-9679045">
        <id>Q9NQL9</id>
        <label>DMRT3</label>
    </interactant>
    <organismsDiffer>false</organismsDiffer>
    <experiments>3</experiments>
</comment>
<comment type="interaction">
    <interactant intactId="EBI-10271199">
        <id>Q8NI38</id>
    </interactant>
    <interactant intactId="EBI-2340258">
        <id>Q8N9I9</id>
        <label>DTX3</label>
    </interactant>
    <organismsDiffer>false</organismsDiffer>
    <experiments>3</experiments>
</comment>
<comment type="interaction">
    <interactant intactId="EBI-10271199">
        <id>Q8NI38</id>
    </interactant>
    <interactant intactId="EBI-2349927">
        <id>Q5JST6</id>
        <label>EFHC2</label>
    </interactant>
    <organismsDiffer>false</organismsDiffer>
    <experiments>3</experiments>
</comment>
<comment type="interaction">
    <interactant intactId="EBI-10271199">
        <id>Q8NI38</id>
    </interactant>
    <interactant intactId="EBI-742350">
        <id>Q14241</id>
        <label>ELOA</label>
    </interactant>
    <organismsDiffer>false</organismsDiffer>
    <experiments>3</experiments>
</comment>
<comment type="interaction">
    <interactant intactId="EBI-10271199">
        <id>Q8NI38</id>
    </interactant>
    <interactant intactId="EBI-12259414">
        <id>Q92731-3</id>
        <label>ESR2</label>
    </interactant>
    <organismsDiffer>false</organismsDiffer>
    <experiments>3</experiments>
</comment>
<comment type="interaction">
    <interactant intactId="EBI-10271199">
        <id>Q8NI38</id>
    </interactant>
    <interactant intactId="EBI-12013806">
        <id>Q6NZ36-4</id>
        <label>FAAP20</label>
    </interactant>
    <organismsDiffer>false</organismsDiffer>
    <experiments>6</experiments>
</comment>
<comment type="interaction">
    <interactant intactId="EBI-10271199">
        <id>Q8NI38</id>
    </interactant>
    <interactant intactId="EBI-11977223">
        <id>O95990-4</id>
        <label>FAM107A</label>
    </interactant>
    <organismsDiffer>false</organismsDiffer>
    <experiments>3</experiments>
</comment>
<comment type="interaction">
    <interactant intactId="EBI-10271199">
        <id>Q8NI38</id>
    </interactant>
    <interactant intactId="EBI-2513774">
        <id>O95363</id>
        <label>FARS2</label>
    </interactant>
    <organismsDiffer>false</organismsDiffer>
    <experiments>3</experiments>
</comment>
<comment type="interaction">
    <interactant intactId="EBI-10271199">
        <id>Q8NI38</id>
    </interactant>
    <interactant intactId="EBI-12018822">
        <id>Q12951-2</id>
        <label>FOXI1</label>
    </interactant>
    <organismsDiffer>false</organismsDiffer>
    <experiments>3</experiments>
</comment>
<comment type="interaction">
    <interactant intactId="EBI-10271199">
        <id>Q8NI38</id>
    </interactant>
    <interactant intactId="EBI-372506">
        <id>Q8TAE8</id>
        <label>GADD45GIP1</label>
    </interactant>
    <organismsDiffer>false</organismsDiffer>
    <experiments>3</experiments>
</comment>
<comment type="interaction">
    <interactant intactId="EBI-10271199">
        <id>Q8NI38</id>
    </interactant>
    <interactant intactId="EBI-744302">
        <id>P14136</id>
        <label>GFAP</label>
    </interactant>
    <organismsDiffer>false</organismsDiffer>
    <experiments>3</experiments>
</comment>
<comment type="interaction">
    <interactant intactId="EBI-10271199">
        <id>Q8NI38</id>
    </interactant>
    <interactant intactId="EBI-947774">
        <id>O75420</id>
        <label>GIGYF1</label>
    </interactant>
    <organismsDiffer>false</organismsDiffer>
    <experiments>3</experiments>
</comment>
<comment type="interaction">
    <interactant intactId="EBI-10271199">
        <id>Q8NI38</id>
    </interactant>
    <interactant intactId="EBI-748515">
        <id>Q8IVS8</id>
        <label>GLYCTK</label>
    </interactant>
    <organismsDiffer>false</organismsDiffer>
    <experiments>3</experiments>
</comment>
<comment type="interaction">
    <interactant intactId="EBI-10271199">
        <id>Q8NI38</id>
    </interactant>
    <interactant intactId="EBI-751540">
        <id>O95872</id>
        <label>GPANK1</label>
    </interactant>
    <organismsDiffer>false</organismsDiffer>
    <experiments>3</experiments>
</comment>
<comment type="interaction">
    <interactant intactId="EBI-10271199">
        <id>Q8NI38</id>
    </interactant>
    <interactant intactId="EBI-12353035">
        <id>Q13322-4</id>
        <label>GRB10</label>
    </interactant>
    <organismsDiffer>false</organismsDiffer>
    <experiments>3</experiments>
</comment>
<comment type="interaction">
    <interactant intactId="EBI-10271199">
        <id>Q8NI38</id>
    </interactant>
    <interactant intactId="EBI-11953488">
        <id>P56524-2</id>
        <label>HDAC4</label>
    </interactant>
    <organismsDiffer>false</organismsDiffer>
    <experiments>3</experiments>
</comment>
<comment type="interaction">
    <interactant intactId="EBI-10271199">
        <id>Q8NI38</id>
    </interactant>
    <interactant intactId="EBI-352986">
        <id>P52597</id>
        <label>HNRNPF</label>
    </interactant>
    <organismsDiffer>false</organismsDiffer>
    <experiments>3</experiments>
</comment>
<comment type="interaction">
    <interactant intactId="EBI-10271199">
        <id>Q8NI38</id>
    </interactant>
    <interactant intactId="EBI-351590">
        <id>P31943</id>
        <label>HNRNPH1</label>
    </interactant>
    <organismsDiffer>false</organismsDiffer>
    <experiments>3</experiments>
</comment>
<comment type="interaction">
    <interactant intactId="EBI-10271199">
        <id>Q8NI38</id>
    </interactant>
    <interactant intactId="EBI-740785">
        <id>P49639</id>
        <label>HOXA1</label>
    </interactant>
    <organismsDiffer>false</organismsDiffer>
    <experiments>3</experiments>
</comment>
<comment type="interaction">
    <interactant intactId="EBI-10271199">
        <id>Q8NI38</id>
    </interactant>
    <interactant intactId="EBI-3893317">
        <id>P09067</id>
        <label>HOXB5</label>
    </interactant>
    <organismsDiffer>false</organismsDiffer>
    <experiments>3</experiments>
</comment>
<comment type="interaction">
    <interactant intactId="EBI-10271199">
        <id>Q8NI38</id>
    </interactant>
    <interactant intactId="EBI-1752118">
        <id>P31273</id>
        <label>HOXC8</label>
    </interactant>
    <organismsDiffer>false</organismsDiffer>
    <experiments>3</experiments>
</comment>
<comment type="interaction">
    <interactant intactId="EBI-10271199">
        <id>Q8NI38</id>
    </interactant>
    <interactant intactId="EBI-1779423">
        <id>P31274</id>
        <label>HOXC9</label>
    </interactant>
    <organismsDiffer>false</organismsDiffer>
    <experiments>3</experiments>
</comment>
<comment type="interaction">
    <interactant intactId="EBI-10271199">
        <id>Q8NI38</id>
    </interactant>
    <interactant intactId="EBI-3957655">
        <id>P31249</id>
        <label>HOXD3</label>
    </interactant>
    <organismsDiffer>false</organismsDiffer>
    <experiments>3</experiments>
</comment>
<comment type="interaction">
    <interactant intactId="EBI-10271199">
        <id>Q8NI38</id>
    </interactant>
    <interactant intactId="EBI-2685549">
        <id>C9JCN9</id>
        <label>HSBP1L1</label>
    </interactant>
    <organismsDiffer>false</organismsDiffer>
    <experiments>3</experiments>
</comment>
<comment type="interaction">
    <interactant intactId="EBI-10271199">
        <id>Q8NI38</id>
    </interactant>
    <interactant intactId="EBI-8638439">
        <id>Q8IYA8</id>
        <label>IHO1</label>
    </interactant>
    <organismsDiffer>false</organismsDiffer>
    <experiments>3</experiments>
</comment>
<comment type="interaction">
    <interactant intactId="EBI-10271199">
        <id>Q8NI38</id>
    </interactant>
    <interactant intactId="EBI-747204">
        <id>Q9UKT9</id>
        <label>IKZF3</label>
    </interactant>
    <organismsDiffer>false</organismsDiffer>
    <experiments>3</experiments>
</comment>
<comment type="interaction">
    <interactant intactId="EBI-10271199">
        <id>Q8NI38</id>
    </interactant>
    <interactant intactId="EBI-6509505">
        <id>Q0VD86</id>
        <label>INCA1</label>
    </interactant>
    <organismsDiffer>false</organismsDiffer>
    <experiments>3</experiments>
</comment>
<comment type="interaction">
    <interactant intactId="EBI-10271199">
        <id>Q8NI38</id>
    </interactant>
    <interactant intactId="EBI-12100506">
        <id>P78412</id>
        <label>IRX6</label>
    </interactant>
    <organismsDiffer>false</organismsDiffer>
    <experiments>3</experiments>
</comment>
<comment type="interaction">
    <interactant intactId="EBI-10271199">
        <id>Q8NI38</id>
    </interactant>
    <interactant intactId="EBI-17269253">
        <id>J3KNH0</id>
        <label>KICS2</label>
    </interactant>
    <organismsDiffer>false</organismsDiffer>
    <experiments>3</experiments>
</comment>
<comment type="interaction">
    <interactant intactId="EBI-10271199">
        <id>Q8NI38</id>
    </interactant>
    <interactant intactId="EBI-742756">
        <id>P08727</id>
        <label>KRT19</label>
    </interactant>
    <organismsDiffer>false</organismsDiffer>
    <experiments>3</experiments>
</comment>
<comment type="interaction">
    <interactant intactId="EBI-10271199">
        <id>Q8NI38</id>
    </interactant>
    <interactant intactId="EBI-1047093">
        <id>O76011</id>
        <label>KRT34</label>
    </interactant>
    <organismsDiffer>false</organismsDiffer>
    <experiments>3</experiments>
</comment>
<comment type="interaction">
    <interactant intactId="EBI-10271199">
        <id>Q8NI38</id>
    </interactant>
    <interactant intactId="EBI-10171697">
        <id>Q6A162</id>
        <label>KRT40</label>
    </interactant>
    <organismsDiffer>false</organismsDiffer>
    <experiments>3</experiments>
</comment>
<comment type="interaction">
    <interactant intactId="EBI-10271199">
        <id>Q8NI38</id>
    </interactant>
    <interactant intactId="EBI-2949715">
        <id>O95678</id>
        <label>KRT75</label>
    </interactant>
    <organismsDiffer>false</organismsDiffer>
    <experiments>6</experiments>
</comment>
<comment type="interaction">
    <interactant intactId="EBI-10271199">
        <id>Q8NI38</id>
    </interactant>
    <interactant intactId="EBI-2952745">
        <id>Q01546</id>
        <label>KRT76</label>
    </interactant>
    <organismsDiffer>false</organismsDiffer>
    <experiments>3</experiments>
</comment>
<comment type="interaction">
    <interactant intactId="EBI-10271199">
        <id>Q8NI38</id>
    </interactant>
    <interactant intactId="EBI-11962084">
        <id>Q3LI66</id>
        <label>KRTAP6-2</label>
    </interactant>
    <organismsDiffer>false</organismsDiffer>
    <experiments>3</experiments>
</comment>
<comment type="interaction">
    <interactant intactId="EBI-10271199">
        <id>Q8NI38</id>
    </interactant>
    <interactant intactId="EBI-13287659">
        <id>P06239-3</id>
        <label>LCK</label>
    </interactant>
    <organismsDiffer>false</organismsDiffer>
    <experiments>3</experiments>
</comment>
<comment type="interaction">
    <interactant intactId="EBI-10271199">
        <id>Q8NI38</id>
    </interactant>
    <interactant intactId="EBI-10274069">
        <id>Q8TCE9</id>
        <label>LGALS14</label>
    </interactant>
    <organismsDiffer>false</organismsDiffer>
    <experiments>3</experiments>
</comment>
<comment type="interaction">
    <interactant intactId="EBI-10271199">
        <id>Q8NI38</id>
    </interactant>
    <interactant intactId="EBI-12039345">
        <id>Q9UBR4-2</id>
        <label>LHX3</label>
    </interactant>
    <organismsDiffer>false</organismsDiffer>
    <experiments>3</experiments>
</comment>
<comment type="interaction">
    <interactant intactId="EBI-10271199">
        <id>Q8NI38</id>
    </interactant>
    <interactant intactId="EBI-11959475">
        <id>P25791-3</id>
        <label>LMO2</label>
    </interactant>
    <organismsDiffer>false</organismsDiffer>
    <experiments>3</experiments>
</comment>
<comment type="interaction">
    <interactant intactId="EBI-10271199">
        <id>Q8NI38</id>
    </interactant>
    <interactant intactId="EBI-11742507">
        <id>Q8TAP4-4</id>
        <label>LMO3</label>
    </interactant>
    <organismsDiffer>false</organismsDiffer>
    <experiments>3</experiments>
</comment>
<comment type="interaction">
    <interactant intactId="EBI-10271199">
        <id>Q8NI38</id>
    </interactant>
    <interactant intactId="EBI-2798728">
        <id>P61968</id>
        <label>LMO4</label>
    </interactant>
    <organismsDiffer>false</organismsDiffer>
    <experiments>3</experiments>
</comment>
<comment type="interaction">
    <interactant intactId="EBI-10271199">
        <id>Q8NI38</id>
    </interactant>
    <interactant intactId="EBI-16439278">
        <id>Q6FHY5</id>
        <label>MEOX2</label>
    </interactant>
    <organismsDiffer>false</organismsDiffer>
    <experiments>3</experiments>
</comment>
<comment type="interaction">
    <interactant intactId="EBI-10271199">
        <id>Q8NI38</id>
    </interactant>
    <interactant intactId="EBI-723426">
        <id>Q13084</id>
        <label>MRPL28</label>
    </interactant>
    <organismsDiffer>false</organismsDiffer>
    <experiments>3</experiments>
</comment>
<comment type="interaction">
    <interactant intactId="EBI-10271199">
        <id>Q8NI38</id>
    </interactant>
    <interactant intactId="EBI-2513715">
        <id>Q96EL3</id>
        <label>MRPL53</label>
    </interactant>
    <organismsDiffer>false</organismsDiffer>
    <experiments>3</experiments>
</comment>
<comment type="interaction">
    <interactant intactId="EBI-10271199">
        <id>Q8NI38</id>
    </interactant>
    <interactant intactId="EBI-10318831">
        <id>Q9P2K5-2</id>
        <label>MYEF2</label>
    </interactant>
    <organismsDiffer>false</organismsDiffer>
    <experiments>3</experiments>
</comment>
<comment type="interaction">
    <interactant intactId="EBI-10271199">
        <id>Q8NI38</id>
    </interactant>
    <interactant intactId="EBI-713635">
        <id>O43639</id>
        <label>NCK2</label>
    </interactant>
    <organismsDiffer>false</organismsDiffer>
    <experiments>3</experiments>
</comment>
<comment type="interaction">
    <interactant intactId="EBI-10271199">
        <id>Q8NI38</id>
    </interactant>
    <interactant intactId="EBI-1246238">
        <id>P17568</id>
        <label>NDUFB7</label>
    </interactant>
    <organismsDiffer>false</organismsDiffer>
    <experiments>3</experiments>
</comment>
<comment type="interaction">
    <interactant intactId="EBI-10271199">
        <id>Q8NI38</id>
    </interactant>
    <interactant intactId="EBI-13324229">
        <id>Q9BSH3</id>
        <label>NICN1</label>
    </interactant>
    <organismsDiffer>false</organismsDiffer>
    <experiments>3</experiments>
</comment>
<comment type="interaction">
    <interactant intactId="EBI-10271199">
        <id>Q8NI38</id>
    </interactant>
    <interactant intactId="EBI-741048">
        <id>Q7Z3B4</id>
        <label>NUP54</label>
    </interactant>
    <organismsDiffer>false</organismsDiffer>
    <experiments>3</experiments>
</comment>
<comment type="interaction">
    <interactant intactId="EBI-10271199">
        <id>Q8NI38</id>
    </interactant>
    <interactant intactId="EBI-2562092">
        <id>Q86TB9</id>
        <label>PATL1</label>
    </interactant>
    <organismsDiffer>false</organismsDiffer>
    <experiments>3</experiments>
</comment>
<comment type="interaction">
    <interactant intactId="EBI-10271199">
        <id>Q8NI38</id>
    </interactant>
    <interactant intactId="EBI-11022007">
        <id>Q9HBE1-4</id>
        <label>PATZ1</label>
    </interactant>
    <organismsDiffer>false</organismsDiffer>
    <experiments>3</experiments>
</comment>
<comment type="interaction">
    <interactant intactId="EBI-10271199">
        <id>Q8NI38</id>
    </interactant>
    <interactant intactId="EBI-747278">
        <id>P26367</id>
        <label>PAX6</label>
    </interactant>
    <organismsDiffer>false</organismsDiffer>
    <experiments>3</experiments>
</comment>
<comment type="interaction">
    <interactant intactId="EBI-10271199">
        <id>Q8NI38</id>
    </interactant>
    <interactant intactId="EBI-9087684">
        <id>Q13835-2</id>
        <label>PKP1</label>
    </interactant>
    <organismsDiffer>false</organismsDiffer>
    <experiments>3</experiments>
</comment>
<comment type="interaction">
    <interactant intactId="EBI-10271199">
        <id>Q8NI38</id>
    </interactant>
    <interactant intactId="EBI-12014286">
        <id>Q494U1-3</id>
        <label>PLEKHN1</label>
    </interactant>
    <organismsDiffer>false</organismsDiffer>
    <experiments>3</experiments>
</comment>
<comment type="interaction">
    <interactant intactId="EBI-10271199">
        <id>Q8NI38</id>
    </interactant>
    <interactant intactId="EBI-12219503">
        <id>P01189</id>
        <label>POMC</label>
    </interactant>
    <organismsDiffer>false</organismsDiffer>
    <experiments>3</experiments>
</comment>
<comment type="interaction">
    <interactant intactId="EBI-10271199">
        <id>Q8NI38</id>
    </interactant>
    <interactant intactId="EBI-17236143">
        <id>Q12837</id>
        <label>POU4F2</label>
    </interactant>
    <organismsDiffer>false</organismsDiffer>
    <experiments>3</experiments>
</comment>
<comment type="interaction">
    <interactant intactId="EBI-10271199">
        <id>Q8NI38</id>
    </interactant>
    <interactant intactId="EBI-11320284">
        <id>Q9NQX0</id>
        <label>PRDM6</label>
    </interactant>
    <organismsDiffer>false</organismsDiffer>
    <experiments>3</experiments>
</comment>
<comment type="interaction">
    <interactant intactId="EBI-10271199">
        <id>Q8NI38</id>
    </interactant>
    <interactant intactId="EBI-3215577">
        <id>Q9NVM4</id>
        <label>PRMT7</label>
    </interactant>
    <organismsDiffer>false</organismsDiffer>
    <experiments>3</experiments>
</comment>
<comment type="interaction">
    <interactant intactId="EBI-10271199">
        <id>Q8NI38</id>
    </interactant>
    <interactant intactId="EBI-372312">
        <id>P28062-2</id>
        <label>PSMB8</label>
    </interactant>
    <organismsDiffer>false</organismsDiffer>
    <experiments>3</experiments>
</comment>
<comment type="interaction">
    <interactant intactId="EBI-10271199">
        <id>Q8NI38</id>
    </interactant>
    <interactant intactId="EBI-2560233">
        <id>O75127</id>
        <label>PTCD1</label>
    </interactant>
    <organismsDiffer>false</organismsDiffer>
    <experiments>3</experiments>
</comment>
<comment type="interaction">
    <interactant intactId="EBI-10271199">
        <id>Q8NI38</id>
    </interactant>
    <interactant intactId="EBI-347462">
        <id>P47897</id>
        <label>QARS1</label>
    </interactant>
    <organismsDiffer>false</organismsDiffer>
    <experiments>3</experiments>
</comment>
<comment type="interaction">
    <interactant intactId="EBI-10271199">
        <id>Q8NI38</id>
    </interactant>
    <interactant intactId="EBI-1055693">
        <id>O75771</id>
        <label>RAD51D</label>
    </interactant>
    <organismsDiffer>false</organismsDiffer>
    <experiments>3</experiments>
</comment>
<comment type="interaction">
    <interactant intactId="EBI-10271199">
        <id>Q8NI38</id>
    </interactant>
    <interactant intactId="EBI-954272">
        <id>Q96PK6</id>
        <label>RBM14</label>
    </interactant>
    <organismsDiffer>false</organismsDiffer>
    <experiments>3</experiments>
</comment>
<comment type="interaction">
    <interactant intactId="EBI-10271199">
        <id>Q8NI38</id>
    </interactant>
    <interactant intactId="EBI-740773">
        <id>Q96IZ5</id>
        <label>RBM41</label>
    </interactant>
    <organismsDiffer>false</organismsDiffer>
    <experiments>3</experiments>
</comment>
<comment type="interaction">
    <interactant intactId="EBI-10271199">
        <id>Q8NI38</id>
    </interactant>
    <interactant intactId="EBI-715531">
        <id>Q9BQ04</id>
        <label>RBM4B</label>
    </interactant>
    <organismsDiffer>false</organismsDiffer>
    <experiments>3</experiments>
</comment>
<comment type="interaction">
    <interactant intactId="EBI-10271199">
        <id>Q8NI38</id>
    </interactant>
    <interactant intactId="EBI-746731">
        <id>P48378</id>
        <label>RFX2</label>
    </interactant>
    <organismsDiffer>false</organismsDiffer>
    <experiments>3</experiments>
</comment>
<comment type="interaction">
    <interactant intactId="EBI-10271199">
        <id>Q8NI38</id>
    </interactant>
    <interactant intactId="EBI-752313">
        <id>Q06587</id>
        <label>RING1</label>
    </interactant>
    <organismsDiffer>false</organismsDiffer>
    <experiments>3</experiments>
</comment>
<comment type="interaction">
    <interactant intactId="EBI-10271199">
        <id>Q8NI38</id>
    </interactant>
    <interactant intactId="EBI-10217913">
        <id>Q14D33</id>
        <label>RTP5</label>
    </interactant>
    <organismsDiffer>false</organismsDiffer>
    <experiments>3</experiments>
</comment>
<comment type="interaction">
    <interactant intactId="EBI-10271199">
        <id>Q8NI38</id>
    </interactant>
    <interactant intactId="EBI-12001422">
        <id>Q01196-8</id>
        <label>RUNX1</label>
    </interactant>
    <organismsDiffer>false</organismsDiffer>
    <experiments>3</experiments>
</comment>
<comment type="interaction">
    <interactant intactId="EBI-10271199">
        <id>Q8NI38</id>
    </interactant>
    <interactant intactId="EBI-14067109">
        <id>Q96NU1</id>
        <label>SAMD11</label>
    </interactant>
    <organismsDiffer>false</organismsDiffer>
    <experiments>3</experiments>
</comment>
<comment type="interaction">
    <interactant intactId="EBI-10271199">
        <id>Q8NI38</id>
    </interactant>
    <interactant intactId="EBI-11986417">
        <id>Q9UPU9-3</id>
        <label>SAMD4A</label>
    </interactant>
    <organismsDiffer>false</organismsDiffer>
    <experiments>3</experiments>
</comment>
<comment type="interaction">
    <interactant intactId="EBI-10271199">
        <id>Q8NI38</id>
    </interactant>
    <interactant intactId="EBI-748391">
        <id>Q9BWG6</id>
        <label>SCNM1</label>
    </interactant>
    <organismsDiffer>false</organismsDiffer>
    <experiments>3</experiments>
</comment>
<comment type="interaction">
    <interactant intactId="EBI-10271199">
        <id>Q8NI38</id>
    </interactant>
    <interactant intactId="EBI-3923013">
        <id>O14796</id>
        <label>SH2D1B</label>
    </interactant>
    <organismsDiffer>false</organismsDiffer>
    <experiments>3</experiments>
</comment>
<comment type="interaction">
    <interactant intactId="EBI-10271199">
        <id>Q8NI38</id>
    </interactant>
    <interactant intactId="EBI-750559">
        <id>O95391</id>
        <label>SLU7</label>
    </interactant>
    <organismsDiffer>false</organismsDiffer>
    <experiments>3</experiments>
</comment>
<comment type="interaction">
    <interactant intactId="EBI-10271199">
        <id>Q8NI38</id>
    </interactant>
    <interactant intactId="EBI-347263">
        <id>Q13485</id>
        <label>SMAD4</label>
    </interactant>
    <organismsDiffer>false</organismsDiffer>
    <experiments>3</experiments>
</comment>
<comment type="interaction">
    <interactant intactId="EBI-10271199">
        <id>Q8NI38</id>
    </interactant>
    <interactant intactId="EBI-2872322">
        <id>Q9H0W8</id>
        <label>SMG9</label>
    </interactant>
    <organismsDiffer>false</organismsDiffer>
    <experiments>3</experiments>
</comment>
<comment type="interaction">
    <interactant intactId="EBI-10271199">
        <id>Q8NI38</id>
    </interactant>
    <interactant intactId="EBI-1760638">
        <id>Q92966</id>
        <label>SNAPC3</label>
    </interactant>
    <organismsDiffer>false</organismsDiffer>
    <experiments>6</experiments>
</comment>
<comment type="interaction">
    <interactant intactId="EBI-10271199">
        <id>Q8NI38</id>
    </interactant>
    <interactant intactId="EBI-741237">
        <id>O60504</id>
        <label>SORBS3</label>
    </interactant>
    <organismsDiffer>false</organismsDiffer>
    <experiments>3</experiments>
</comment>
<comment type="interaction">
    <interactant intactId="EBI-10271199">
        <id>Q8NI38</id>
    </interactant>
    <interactant intactId="EBI-12020542">
        <id>Q96LM5</id>
        <label>SPMIP2</label>
    </interactant>
    <organismsDiffer>false</organismsDiffer>
    <experiments>3</experiments>
</comment>
<comment type="interaction">
    <interactant intactId="EBI-10271199">
        <id>Q8NI38</id>
    </interactant>
    <interactant intactId="EBI-10271195">
        <id>Q4VAX2</id>
        <label>SS18</label>
    </interactant>
    <organismsDiffer>false</organismsDiffer>
    <experiments>3</experiments>
</comment>
<comment type="interaction">
    <interactant intactId="EBI-10271199">
        <id>Q8NI38</id>
    </interactant>
    <interactant intactId="EBI-7413767">
        <id>Q9Y242</id>
        <label>TCF19</label>
    </interactant>
    <organismsDiffer>false</organismsDiffer>
    <experiments>3</experiments>
</comment>
<comment type="interaction">
    <interactant intactId="EBI-10271199">
        <id>Q8NI38</id>
    </interactant>
    <interactant intactId="EBI-13636688">
        <id>P15884-3</id>
        <label>TCF4</label>
    </interactant>
    <organismsDiffer>false</organismsDiffer>
    <experiments>3</experiments>
</comment>
<comment type="interaction">
    <interactant intactId="EBI-10271199">
        <id>Q8NI38</id>
    </interactant>
    <interactant intactId="EBI-749995">
        <id>P56279</id>
        <label>TCL1A</label>
    </interactant>
    <organismsDiffer>false</organismsDiffer>
    <experiments>3</experiments>
</comment>
<comment type="interaction">
    <interactant intactId="EBI-10271199">
        <id>Q8NI38</id>
    </interactant>
    <interactant intactId="EBI-750487">
        <id>Q8WW24</id>
        <label>TEKT4</label>
    </interactant>
    <organismsDiffer>false</organismsDiffer>
    <experiments>3</experiments>
</comment>
<comment type="interaction">
    <interactant intactId="EBI-10271199">
        <id>Q8NI38</id>
    </interactant>
    <interactant intactId="EBI-10239812">
        <id>Q96M29</id>
        <label>TEKT5</label>
    </interactant>
    <organismsDiffer>false</organismsDiffer>
    <experiments>3</experiments>
</comment>
<comment type="interaction">
    <interactant intactId="EBI-10271199">
        <id>Q8NI38</id>
    </interactant>
    <interactant intactId="EBI-1105213">
        <id>Q9UBB9</id>
        <label>TFIP11</label>
    </interactant>
    <organismsDiffer>false</organismsDiffer>
    <experiments>3</experiments>
</comment>
<comment type="interaction">
    <interactant intactId="EBI-10271199">
        <id>Q8NI38</id>
    </interactant>
    <interactant intactId="EBI-355744">
        <id>Q12933</id>
        <label>TRAF2</label>
    </interactant>
    <organismsDiffer>false</organismsDiffer>
    <experiments>3</experiments>
</comment>
<comment type="interaction">
    <interactant intactId="EBI-10271199">
        <id>Q8NI38</id>
    </interactant>
    <interactant intactId="EBI-702370">
        <id>Q14134</id>
        <label>TRIM29</label>
    </interactant>
    <organismsDiffer>false</organismsDiffer>
    <experiments>3</experiments>
</comment>
<comment type="interaction">
    <interactant intactId="EBI-10271199">
        <id>Q8NI38</id>
    </interactant>
    <interactant intactId="EBI-720828">
        <id>Q9C026</id>
        <label>TRIM9</label>
    </interactant>
    <organismsDiffer>false</organismsDiffer>
    <experiments>3</experiments>
</comment>
<comment type="interaction">
    <interactant intactId="EBI-10271199">
        <id>Q8NI38</id>
    </interactant>
    <interactant intactId="EBI-11059915">
        <id>Q8N7C3</id>
        <label>TRIML2</label>
    </interactant>
    <organismsDiffer>false</organismsDiffer>
    <experiments>3</experiments>
</comment>
<comment type="interaction">
    <interactant intactId="EBI-10271199">
        <id>Q8NI38</id>
    </interactant>
    <interactant intactId="EBI-2559824">
        <id>Q7Z6J9</id>
        <label>TSEN54</label>
    </interactant>
    <organismsDiffer>false</organismsDiffer>
    <experiments>3</experiments>
</comment>
<comment type="interaction">
    <interactant intactId="EBI-10271199">
        <id>Q8NI38</id>
    </interactant>
    <interactant intactId="EBI-3918381">
        <id>Q96PN8</id>
        <label>TSSK3</label>
    </interactant>
    <organismsDiffer>false</organismsDiffer>
    <experiments>3</experiments>
</comment>
<comment type="interaction">
    <interactant intactId="EBI-10271199">
        <id>Q8NI38</id>
    </interactant>
    <interactant intactId="EBI-5457544">
        <id>Q9BRU9</id>
        <label>UTP23</label>
    </interactant>
    <organismsDiffer>false</organismsDiffer>
    <experiments>3</experiments>
</comment>
<comment type="interaction">
    <interactant intactId="EBI-10271199">
        <id>Q8NI38</id>
    </interactant>
    <interactant intactId="EBI-353844">
        <id>P08670</id>
        <label>VIM</label>
    </interactant>
    <organismsDiffer>false</organismsDiffer>
    <experiments>3</experiments>
</comment>
<comment type="interaction">
    <interactant intactId="EBI-10271199">
        <id>Q8NI38</id>
    </interactant>
    <interactant intactId="EBI-711925">
        <id>Q05516</id>
        <label>ZBTB16</label>
    </interactant>
    <organismsDiffer>false</organismsDiffer>
    <experiments>3</experiments>
</comment>
<comment type="interaction">
    <interactant intactId="EBI-10271199">
        <id>Q8NI38</id>
    </interactant>
    <interactant intactId="EBI-12275374">
        <id>Q5TFG8</id>
        <label>ZC2HC1B</label>
    </interactant>
    <organismsDiffer>false</organismsDiffer>
    <experiments>3</experiments>
</comment>
<comment type="interaction">
    <interactant intactId="EBI-10271199">
        <id>Q8NI38</id>
    </interactant>
    <interactant intactId="EBI-11963196">
        <id>Q15915</id>
        <label>ZIC1</label>
    </interactant>
    <organismsDiffer>false</organismsDiffer>
    <experiments>3</experiments>
</comment>
<comment type="subcellular location">
    <subcellularLocation>
        <location evidence="1">Nucleus</location>
    </subcellularLocation>
</comment>
<comment type="alternative products">
    <event type="alternative splicing"/>
    <isoform>
        <id>Q8NI38-1</id>
        <name>1</name>
        <sequence type="displayed"/>
    </isoform>
    <isoform>
        <id>Q8NI38-2</id>
        <name>2</name>
        <sequence type="described" ref="VSP_033144"/>
    </isoform>
    <isoform>
        <id>Q8NI38-3</id>
        <name>3</name>
        <sequence type="described" ref="VSP_033143 VSP_033145"/>
    </isoform>
</comment>
<comment type="similarity">
    <text evidence="4">Belongs to the NF-kappa-B inhibitor family.</text>
</comment>
<proteinExistence type="evidence at protein level"/>
<feature type="chain" id="PRO_0000331114" description="NF-kappa-B inhibitor delta">
    <location>
        <begin position="1"/>
        <end position="313"/>
    </location>
</feature>
<feature type="repeat" description="ANK 1">
    <location>
        <begin position="48"/>
        <end position="83"/>
    </location>
</feature>
<feature type="repeat" description="ANK 2">
    <location>
        <begin position="84"/>
        <end position="113"/>
    </location>
</feature>
<feature type="repeat" description="ANK 3">
    <location>
        <begin position="117"/>
        <end position="146"/>
    </location>
</feature>
<feature type="repeat" description="ANK 4">
    <location>
        <begin position="152"/>
        <end position="201"/>
    </location>
</feature>
<feature type="repeat" description="ANK 5">
    <location>
        <begin position="206"/>
        <end position="236"/>
    </location>
</feature>
<feature type="repeat" description="ANK 6">
    <location>
        <begin position="243"/>
        <end position="276"/>
    </location>
</feature>
<feature type="splice variant" id="VSP_033143" description="In isoform 3." evidence="3">
    <location>
        <begin position="1"/>
        <end position="201"/>
    </location>
</feature>
<feature type="splice variant" id="VSP_033144" description="In isoform 2." evidence="2">
    <original>M</original>
    <variation>MWVCLRGILDSQAFWHETLRRWECLLAEMKVSRGERSHCPTQTVKKLLEEQRRRQQQQPDAGGVQGQFLPPPEQPLTPSVNEAVTGHPPFPAHSETVGSGPSSLGFPDWDPNTHAAYTDSPYSCPASAAENFLPPDFYPPSDPGQPCPFPQGM</variation>
    <location>
        <position position="1"/>
    </location>
</feature>
<feature type="splice variant" id="VSP_033145" description="In isoform 3." evidence="3">
    <original>Q</original>
    <variation>MRSCCVVQAGLQLLASSDPPSSASQSARITGVNHRTPPR</variation>
    <location>
        <position position="202"/>
    </location>
</feature>
<feature type="sequence variant" id="VAR_042737" description="In dbSNP:rs8113704.">
    <original>V</original>
    <variation>A</variation>
    <location>
        <position position="29"/>
    </location>
</feature>